<name>RL10E_METMP</name>
<keyword id="KW-1185">Reference proteome</keyword>
<keyword id="KW-0687">Ribonucleoprotein</keyword>
<keyword id="KW-0689">Ribosomal protein</keyword>
<protein>
    <recommendedName>
        <fullName evidence="1">Large ribosomal subunit protein uL16</fullName>
    </recommendedName>
    <alternativeName>
        <fullName evidence="2">50S ribosomal protein L10e</fullName>
    </alternativeName>
</protein>
<organism>
    <name type="scientific">Methanococcus maripaludis (strain DSM 14266 / JCM 13030 / NBRC 101832 / S2 / LL)</name>
    <dbReference type="NCBI Taxonomy" id="267377"/>
    <lineage>
        <taxon>Archaea</taxon>
        <taxon>Methanobacteriati</taxon>
        <taxon>Methanobacteriota</taxon>
        <taxon>Methanomada group</taxon>
        <taxon>Methanococci</taxon>
        <taxon>Methanococcales</taxon>
        <taxon>Methanococcaceae</taxon>
        <taxon>Methanococcus</taxon>
    </lineage>
</organism>
<dbReference type="EMBL" id="BX950229">
    <property type="protein sequence ID" value="CAF30845.1"/>
    <property type="molecule type" value="Genomic_DNA"/>
</dbReference>
<dbReference type="RefSeq" id="WP_011171233.1">
    <property type="nucleotide sequence ID" value="NC_005791.1"/>
</dbReference>
<dbReference type="SMR" id="Q6LXR0"/>
<dbReference type="STRING" id="267377.MMP1289"/>
<dbReference type="EnsemblBacteria" id="CAF30845">
    <property type="protein sequence ID" value="CAF30845"/>
    <property type="gene ID" value="MMP1289"/>
</dbReference>
<dbReference type="GeneID" id="10982865"/>
<dbReference type="KEGG" id="mmp:MMP1289"/>
<dbReference type="PATRIC" id="fig|267377.15.peg.1322"/>
<dbReference type="eggNOG" id="arCOG04113">
    <property type="taxonomic scope" value="Archaea"/>
</dbReference>
<dbReference type="HOGENOM" id="CLU_084051_0_2_2"/>
<dbReference type="OrthoDB" id="30538at2157"/>
<dbReference type="Proteomes" id="UP000000590">
    <property type="component" value="Chromosome"/>
</dbReference>
<dbReference type="GO" id="GO:1990904">
    <property type="term" value="C:ribonucleoprotein complex"/>
    <property type="evidence" value="ECO:0007669"/>
    <property type="project" value="UniProtKB-KW"/>
</dbReference>
<dbReference type="GO" id="GO:0005840">
    <property type="term" value="C:ribosome"/>
    <property type="evidence" value="ECO:0007669"/>
    <property type="project" value="UniProtKB-KW"/>
</dbReference>
<dbReference type="GO" id="GO:0003735">
    <property type="term" value="F:structural constituent of ribosome"/>
    <property type="evidence" value="ECO:0007669"/>
    <property type="project" value="InterPro"/>
</dbReference>
<dbReference type="GO" id="GO:0006412">
    <property type="term" value="P:translation"/>
    <property type="evidence" value="ECO:0007669"/>
    <property type="project" value="UniProtKB-UniRule"/>
</dbReference>
<dbReference type="CDD" id="cd01433">
    <property type="entry name" value="Ribosomal_L16_L10e"/>
    <property type="match status" value="1"/>
</dbReference>
<dbReference type="Gene3D" id="3.90.1170.10">
    <property type="entry name" value="Ribosomal protein L10e/L16"/>
    <property type="match status" value="1"/>
</dbReference>
<dbReference type="HAMAP" id="MF_00448">
    <property type="entry name" value="Ribosomal_uL16_arch"/>
    <property type="match status" value="1"/>
</dbReference>
<dbReference type="InterPro" id="IPR047873">
    <property type="entry name" value="Ribosomal_uL16"/>
</dbReference>
<dbReference type="InterPro" id="IPR022981">
    <property type="entry name" value="Ribosomal_uL16_arc"/>
</dbReference>
<dbReference type="InterPro" id="IPR018255">
    <property type="entry name" value="Ribosomal_uL16_CS_euk_arc"/>
</dbReference>
<dbReference type="InterPro" id="IPR016180">
    <property type="entry name" value="Ribosomal_uL16_dom"/>
</dbReference>
<dbReference type="InterPro" id="IPR001197">
    <property type="entry name" value="Ribosomal_uL16_euk_arch"/>
</dbReference>
<dbReference type="InterPro" id="IPR036920">
    <property type="entry name" value="Ribosomal_uL16_sf"/>
</dbReference>
<dbReference type="NCBIfam" id="NF003239">
    <property type="entry name" value="PRK04199.1-4"/>
    <property type="match status" value="1"/>
</dbReference>
<dbReference type="NCBIfam" id="TIGR00279">
    <property type="entry name" value="uL16_euk_arch"/>
    <property type="match status" value="1"/>
</dbReference>
<dbReference type="PANTHER" id="PTHR11726">
    <property type="entry name" value="60S RIBOSOMAL PROTEIN L10"/>
    <property type="match status" value="1"/>
</dbReference>
<dbReference type="Pfam" id="PF00252">
    <property type="entry name" value="Ribosomal_L16"/>
    <property type="match status" value="1"/>
</dbReference>
<dbReference type="PIRSF" id="PIRSF005590">
    <property type="entry name" value="Ribosomal_L10"/>
    <property type="match status" value="1"/>
</dbReference>
<dbReference type="SUPFAM" id="SSF54686">
    <property type="entry name" value="Ribosomal protein L16p/L10e"/>
    <property type="match status" value="1"/>
</dbReference>
<dbReference type="PROSITE" id="PS01257">
    <property type="entry name" value="RIBOSOMAL_L10E"/>
    <property type="match status" value="1"/>
</dbReference>
<feature type="chain" id="PRO_0000147138" description="Large ribosomal subunit protein uL16">
    <location>
        <begin position="1"/>
        <end position="173"/>
    </location>
</feature>
<comment type="similarity">
    <text evidence="1">Belongs to the universal ribosomal protein uL16 family.</text>
</comment>
<sequence>MALRPARCYRTIERRSYTRKEYVRAVPQPKVVHYVMGNPSAEFPVQVQLVSKSDILIRHNALESSRIAGNKYILSECGRTGYLFNIRVYPHEILRENKMAAGAGADRISDGMRLSFGKAVGTAAKVKKGQEIITIGVNPEKFYAAKEALRRCSMKLPTACKIVVTKGKELIKD</sequence>
<reference key="1">
    <citation type="journal article" date="2004" name="J. Bacteriol.">
        <title>Complete genome sequence of the genetically tractable hydrogenotrophic methanogen Methanococcus maripaludis.</title>
        <authorList>
            <person name="Hendrickson E.L."/>
            <person name="Kaul R."/>
            <person name="Zhou Y."/>
            <person name="Bovee D."/>
            <person name="Chapman P."/>
            <person name="Chung J."/>
            <person name="Conway de Macario E."/>
            <person name="Dodsworth J.A."/>
            <person name="Gillett W."/>
            <person name="Graham D.E."/>
            <person name="Hackett M."/>
            <person name="Haydock A.K."/>
            <person name="Kang A."/>
            <person name="Land M.L."/>
            <person name="Levy R."/>
            <person name="Lie T.J."/>
            <person name="Major T.A."/>
            <person name="Moore B.C."/>
            <person name="Porat I."/>
            <person name="Palmeiri A."/>
            <person name="Rouse G."/>
            <person name="Saenphimmachak C."/>
            <person name="Soell D."/>
            <person name="Van Dien S."/>
            <person name="Wang T."/>
            <person name="Whitman W.B."/>
            <person name="Xia Q."/>
            <person name="Zhang Y."/>
            <person name="Larimer F.W."/>
            <person name="Olson M.V."/>
            <person name="Leigh J.A."/>
        </authorList>
    </citation>
    <scope>NUCLEOTIDE SEQUENCE [LARGE SCALE GENOMIC DNA]</scope>
    <source>
        <strain>DSM 14266 / JCM 13030 / NBRC 101832 / S2 / LL</strain>
    </source>
</reference>
<evidence type="ECO:0000255" key="1">
    <source>
        <dbReference type="HAMAP-Rule" id="MF_00448"/>
    </source>
</evidence>
<evidence type="ECO:0000305" key="2"/>
<proteinExistence type="inferred from homology"/>
<accession>Q6LXR0</accession>
<gene>
    <name evidence="1" type="primary">rpl10e</name>
    <name type="ordered locus">MMP1289</name>
</gene>